<sequence>MDASQKAGLIKKLREITNSGFLDCKKALEETNYDLDKAIEWLQENGKAKAAKKSGRIAAEGLVRASVKGKSAVIFELNSETDFVARNKEFLDLMDNISEALVENSFQSMESAENIFMENDLTILEATTKATATIGEKISFRRAKKFDLLEDQTIGAYTHANGRIASLFLVRGKNEEVAKNVAMHIAAMNPEYMSANEVPQEKIEKLKAEFLKSPALAGKPEKIQQSILSGMLNKALAEFVLLNQPFVMESSLSVEQYLKNNKSEALEMIRYEVGEGIEKKAVDFASEVAAQMKK</sequence>
<protein>
    <recommendedName>
        <fullName>Elongation factor Ts</fullName>
        <shortName>EF-Ts</shortName>
    </recommendedName>
</protein>
<proteinExistence type="inferred from homology"/>
<name>EFTS_MYCPU</name>
<dbReference type="EMBL" id="AL445565">
    <property type="protein sequence ID" value="CAC13705.1"/>
    <property type="molecule type" value="Genomic_DNA"/>
</dbReference>
<dbReference type="PIR" id="D90578">
    <property type="entry name" value="D90578"/>
</dbReference>
<dbReference type="RefSeq" id="WP_010925333.1">
    <property type="nucleotide sequence ID" value="NC_002771.1"/>
</dbReference>
<dbReference type="SMR" id="Q98Q37"/>
<dbReference type="STRING" id="272635.gene:17577134"/>
<dbReference type="KEGG" id="mpu:MYPU_5320"/>
<dbReference type="eggNOG" id="COG0264">
    <property type="taxonomic scope" value="Bacteria"/>
</dbReference>
<dbReference type="HOGENOM" id="CLU_047155_0_2_14"/>
<dbReference type="BioCyc" id="MPUL272635:G1GT6-540-MONOMER"/>
<dbReference type="Proteomes" id="UP000000528">
    <property type="component" value="Chromosome"/>
</dbReference>
<dbReference type="GO" id="GO:0005737">
    <property type="term" value="C:cytoplasm"/>
    <property type="evidence" value="ECO:0007669"/>
    <property type="project" value="UniProtKB-SubCell"/>
</dbReference>
<dbReference type="GO" id="GO:0003746">
    <property type="term" value="F:translation elongation factor activity"/>
    <property type="evidence" value="ECO:0007669"/>
    <property type="project" value="UniProtKB-UniRule"/>
</dbReference>
<dbReference type="CDD" id="cd14275">
    <property type="entry name" value="UBA_EF-Ts"/>
    <property type="match status" value="1"/>
</dbReference>
<dbReference type="FunFam" id="1.10.8.10:FF:000001">
    <property type="entry name" value="Elongation factor Ts"/>
    <property type="match status" value="1"/>
</dbReference>
<dbReference type="Gene3D" id="1.10.286.20">
    <property type="match status" value="1"/>
</dbReference>
<dbReference type="Gene3D" id="1.10.8.10">
    <property type="entry name" value="DNA helicase RuvA subunit, C-terminal domain"/>
    <property type="match status" value="1"/>
</dbReference>
<dbReference type="Gene3D" id="3.30.479.20">
    <property type="entry name" value="Elongation factor Ts, dimerisation domain"/>
    <property type="match status" value="2"/>
</dbReference>
<dbReference type="HAMAP" id="MF_00050">
    <property type="entry name" value="EF_Ts"/>
    <property type="match status" value="1"/>
</dbReference>
<dbReference type="InterPro" id="IPR036402">
    <property type="entry name" value="EF-Ts_dimer_sf"/>
</dbReference>
<dbReference type="InterPro" id="IPR001816">
    <property type="entry name" value="Transl_elong_EFTs/EF1B"/>
</dbReference>
<dbReference type="InterPro" id="IPR014039">
    <property type="entry name" value="Transl_elong_EFTs/EF1B_dimer"/>
</dbReference>
<dbReference type="InterPro" id="IPR018101">
    <property type="entry name" value="Transl_elong_Ts_CS"/>
</dbReference>
<dbReference type="InterPro" id="IPR009060">
    <property type="entry name" value="UBA-like_sf"/>
</dbReference>
<dbReference type="NCBIfam" id="TIGR00116">
    <property type="entry name" value="tsf"/>
    <property type="match status" value="1"/>
</dbReference>
<dbReference type="PANTHER" id="PTHR11741">
    <property type="entry name" value="ELONGATION FACTOR TS"/>
    <property type="match status" value="1"/>
</dbReference>
<dbReference type="PANTHER" id="PTHR11741:SF0">
    <property type="entry name" value="ELONGATION FACTOR TS, MITOCHONDRIAL"/>
    <property type="match status" value="1"/>
</dbReference>
<dbReference type="Pfam" id="PF00889">
    <property type="entry name" value="EF_TS"/>
    <property type="match status" value="1"/>
</dbReference>
<dbReference type="SUPFAM" id="SSF54713">
    <property type="entry name" value="Elongation factor Ts (EF-Ts), dimerisation domain"/>
    <property type="match status" value="2"/>
</dbReference>
<dbReference type="SUPFAM" id="SSF46934">
    <property type="entry name" value="UBA-like"/>
    <property type="match status" value="1"/>
</dbReference>
<dbReference type="PROSITE" id="PS01126">
    <property type="entry name" value="EF_TS_1"/>
    <property type="match status" value="1"/>
</dbReference>
<dbReference type="PROSITE" id="PS01127">
    <property type="entry name" value="EF_TS_2"/>
    <property type="match status" value="1"/>
</dbReference>
<keyword id="KW-0963">Cytoplasm</keyword>
<keyword id="KW-0251">Elongation factor</keyword>
<keyword id="KW-0648">Protein biosynthesis</keyword>
<keyword id="KW-1185">Reference proteome</keyword>
<gene>
    <name type="primary">tsf</name>
    <name type="ordered locus">MYPU_5320</name>
</gene>
<organism>
    <name type="scientific">Mycoplasmopsis pulmonis (strain UAB CTIP)</name>
    <name type="common">Mycoplasma pulmonis</name>
    <dbReference type="NCBI Taxonomy" id="272635"/>
    <lineage>
        <taxon>Bacteria</taxon>
        <taxon>Bacillati</taxon>
        <taxon>Mycoplasmatota</taxon>
        <taxon>Mycoplasmoidales</taxon>
        <taxon>Metamycoplasmataceae</taxon>
        <taxon>Mycoplasmopsis</taxon>
    </lineage>
</organism>
<reference key="1">
    <citation type="journal article" date="2001" name="Nucleic Acids Res.">
        <title>The complete genome sequence of the murine respiratory pathogen Mycoplasma pulmonis.</title>
        <authorList>
            <person name="Chambaud I."/>
            <person name="Heilig R."/>
            <person name="Ferris S."/>
            <person name="Barbe V."/>
            <person name="Samson D."/>
            <person name="Galisson F."/>
            <person name="Moszer I."/>
            <person name="Dybvig K."/>
            <person name="Wroblewski H."/>
            <person name="Viari A."/>
            <person name="Rocha E.P.C."/>
            <person name="Blanchard A."/>
        </authorList>
    </citation>
    <scope>NUCLEOTIDE SEQUENCE [LARGE SCALE GENOMIC DNA]</scope>
    <source>
        <strain>UAB CTIP</strain>
    </source>
</reference>
<accession>Q98Q37</accession>
<comment type="function">
    <text evidence="1">Associates with the EF-Tu.GDP complex and induces the exchange of GDP to GTP. It remains bound to the aminoacyl-tRNA.EF-Tu.GTP complex up to the GTP hydrolysis stage on the ribosome (By similarity).</text>
</comment>
<comment type="subcellular location">
    <subcellularLocation>
        <location evidence="1">Cytoplasm</location>
    </subcellularLocation>
</comment>
<comment type="similarity">
    <text evidence="2">Belongs to the EF-Ts family.</text>
</comment>
<feature type="chain" id="PRO_0000161159" description="Elongation factor Ts">
    <location>
        <begin position="1"/>
        <end position="294"/>
    </location>
</feature>
<feature type="region of interest" description="Involved in Mg(2+) ion dislocation from EF-Tu" evidence="1">
    <location>
        <begin position="81"/>
        <end position="84"/>
    </location>
</feature>
<evidence type="ECO:0000250" key="1"/>
<evidence type="ECO:0000305" key="2"/>